<proteinExistence type="predicted"/>
<organism>
    <name type="scientific">Enterobacteria phage PRD1</name>
    <name type="common">Bacteriophage PRD1</name>
    <dbReference type="NCBI Taxonomy" id="10658"/>
    <lineage>
        <taxon>Viruses</taxon>
        <taxon>Varidnaviria</taxon>
        <taxon>Bamfordvirae</taxon>
        <taxon>Preplasmiviricota</taxon>
        <taxon>Tectiliviricetes</taxon>
        <taxon>Kalamavirales</taxon>
        <taxon>Tectiviridae</taxon>
        <taxon>Alphatectivirus</taxon>
        <taxon>Alphatectivirus PRD1</taxon>
    </lineage>
</organism>
<name>VP12_BPPRD</name>
<sequence length="160" mass="16650">MEIVSKLTLKTIGAQPKPHSVKENTALASIYGRVRGKKVGQSTFGDFIKFEGEFEGVNIATGEVFRSGALILPKVLESLLAGAVDGENTVDFAVEIWAKPSEKGNTGYEYGVKPLIEPAASDELAALRNQVKAALPAPAAAGEAAAEAKPAAKAKAKAEA</sequence>
<organismHost>
    <name type="scientific">Acinetobacter calcoaceticus</name>
    <dbReference type="NCBI Taxonomy" id="471"/>
</organismHost>
<organismHost>
    <name type="scientific">Escherichia coli</name>
    <dbReference type="NCBI Taxonomy" id="562"/>
</organismHost>
<organismHost>
    <name type="scientific">Proteus mirabilis</name>
    <dbReference type="NCBI Taxonomy" id="584"/>
</organismHost>
<organismHost>
    <name type="scientific">Pseudomonas aeruginosa</name>
    <dbReference type="NCBI Taxonomy" id="287"/>
</organismHost>
<organismHost>
    <name type="scientific">Pseudomonas fluorescens</name>
    <dbReference type="NCBI Taxonomy" id="294"/>
</organismHost>
<organismHost>
    <name type="scientific">Pseudomonas putida</name>
    <name type="common">Arthrobacter siderocapsulatus</name>
    <dbReference type="NCBI Taxonomy" id="303"/>
</organismHost>
<organismHost>
    <name type="scientific">Salmonella typhimurium</name>
    <dbReference type="NCBI Taxonomy" id="90371"/>
</organismHost>
<organismHost>
    <name type="scientific">Vibrio cholerae</name>
    <dbReference type="NCBI Taxonomy" id="666"/>
</organismHost>
<accession>P17637</accession>
<accession>Q3T4L5</accession>
<keyword id="KW-0238">DNA-binding</keyword>
<keyword id="KW-0244">Early protein</keyword>
<keyword id="KW-0547">Nucleotide-binding</keyword>
<keyword id="KW-1185">Reference proteome</keyword>
<reference key="1">
    <citation type="journal article" date="1989" name="Gene">
        <title>The organization of the right-end early region of bacteriophage PRD1 genome.</title>
        <authorList>
            <person name="Pakula T.M."/>
            <person name="Savilahti H."/>
            <person name="Bamford D.H."/>
        </authorList>
    </citation>
    <scope>NUCLEOTIDE SEQUENCE [GENOMIC DNA]</scope>
</reference>
<reference key="2">
    <citation type="journal article" date="1990" name="J. Bacteriol.">
        <title>Nucleotide sequence and transcription of the right early region of bacteriophage PRD1.</title>
        <authorList>
            <person name="Gerendasy D."/>
            <person name="Ito J."/>
        </authorList>
    </citation>
    <scope>NUCLEOTIDE SEQUENCE [GENOMIC DNA]</scope>
</reference>
<reference key="3">
    <citation type="journal article" date="1991" name="Virology">
        <title>Genome organization of membrane-containing bacteriophage PRD1.</title>
        <authorList>
            <person name="Bamford J.K.H."/>
            <person name="Haenninen A.-L."/>
            <person name="Pakula T.M."/>
            <person name="Ojala P.M."/>
            <person name="Kalkkinen N."/>
            <person name="Frilander M."/>
            <person name="Bamford D.H."/>
        </authorList>
    </citation>
    <scope>NUCLEOTIDE SEQUENCE [GENOMIC DNA]</scope>
</reference>
<reference key="4">
    <citation type="journal article" date="2005" name="J. Mol. Biol.">
        <title>A snapshot of viral evolution from genome analysis of the tectiviridae family.</title>
        <authorList>
            <person name="Saren A.M."/>
            <person name="Ravantti J.J."/>
            <person name="Benson S.D."/>
            <person name="Burnett R.M."/>
            <person name="Paulin L."/>
            <person name="Bamford D.H."/>
            <person name="Bamford J.K.H."/>
        </authorList>
    </citation>
    <scope>NUCLEOTIDE SEQUENCE [GENOMIC DNA]</scope>
</reference>
<gene>
    <name type="primary">XII</name>
</gene>
<feature type="chain" id="PRO_0000165354" description="Single-stranded DNA-binding protein">
    <location>
        <begin position="1"/>
        <end position="160"/>
    </location>
</feature>
<dbReference type="EMBL" id="M33428">
    <property type="protein sequence ID" value="AAA32447.1"/>
    <property type="molecule type" value="Genomic_DNA"/>
</dbReference>
<dbReference type="EMBL" id="M30146">
    <property type="protein sequence ID" value="AAA32453.1"/>
    <property type="molecule type" value="Genomic_DNA"/>
</dbReference>
<dbReference type="EMBL" id="AY848689">
    <property type="protein sequence ID" value="AAX45906.1"/>
    <property type="molecule type" value="Genomic_DNA"/>
</dbReference>
<dbReference type="PIR" id="A35148">
    <property type="entry name" value="A35148"/>
</dbReference>
<dbReference type="RefSeq" id="NP_040702.1">
    <property type="nucleotide sequence ID" value="NC_001421.2"/>
</dbReference>
<dbReference type="RefSeq" id="YP_009639985.1">
    <property type="nucleotide sequence ID" value="NC_001421.2"/>
</dbReference>
<dbReference type="GeneID" id="1260928"/>
<dbReference type="OrthoDB" id="31354at10239"/>
<dbReference type="Proteomes" id="UP000002143">
    <property type="component" value="Segment"/>
</dbReference>
<dbReference type="GO" id="GO:0003677">
    <property type="term" value="F:DNA binding"/>
    <property type="evidence" value="ECO:0007669"/>
    <property type="project" value="UniProtKB-KW"/>
</dbReference>
<dbReference type="GO" id="GO:0000166">
    <property type="term" value="F:nucleotide binding"/>
    <property type="evidence" value="ECO:0007669"/>
    <property type="project" value="UniProtKB-KW"/>
</dbReference>
<protein>
    <recommendedName>
        <fullName>Single-stranded DNA-binding protein</fullName>
    </recommendedName>
    <alternativeName>
        <fullName>Protein P12</fullName>
    </alternativeName>
</protein>
<comment type="function">
    <text>Binds to single-stranded DNA (ssDNA). Has a regulatory effect on phage DNA metabolism and transcription of early genes.</text>
</comment>